<organism evidence="7">
    <name type="scientific">Ixodes scapularis</name>
    <name type="common">Black-legged tick</name>
    <name type="synonym">Deer tick</name>
    <dbReference type="NCBI Taxonomy" id="6945"/>
    <lineage>
        <taxon>Eukaryota</taxon>
        <taxon>Metazoa</taxon>
        <taxon>Ecdysozoa</taxon>
        <taxon>Arthropoda</taxon>
        <taxon>Chelicerata</taxon>
        <taxon>Arachnida</taxon>
        <taxon>Acari</taxon>
        <taxon>Parasitiformes</taxon>
        <taxon>Ixodida</taxon>
        <taxon>Ixodoidea</taxon>
        <taxon>Ixodidae</taxon>
        <taxon>Ixodinae</taxon>
        <taxon>Ixodes</taxon>
    </lineage>
</organism>
<accession>B7PKZ2</accession>
<dbReference type="EMBL" id="DS737013">
    <property type="protein sequence ID" value="EEC07264.1"/>
    <property type="molecule type" value="Genomic_DNA"/>
</dbReference>
<dbReference type="RefSeq" id="XP_002434440.1">
    <property type="nucleotide sequence ID" value="XM_002434395.1"/>
</dbReference>
<dbReference type="SMR" id="B7PKZ2"/>
<dbReference type="STRING" id="6945.B7PKZ2"/>
<dbReference type="MEROPS" id="I25.049"/>
<dbReference type="PaxDb" id="6945-B7PKZ2"/>
<dbReference type="EnsemblMetazoa" id="ISCW018603-RA">
    <property type="protein sequence ID" value="ISCW018603-PA"/>
    <property type="gene ID" value="ISCW018603"/>
</dbReference>
<dbReference type="KEGG" id="isc:8053084"/>
<dbReference type="VEuPathDB" id="VectorBase:ISCI018603"/>
<dbReference type="VEuPathDB" id="VectorBase:ISCP_026933"/>
<dbReference type="VEuPathDB" id="VectorBase:ISCW018603"/>
<dbReference type="HOGENOM" id="CLU_1898537_0_0_1"/>
<dbReference type="InParanoid" id="B7PKZ2"/>
<dbReference type="OrthoDB" id="1908104at2759"/>
<dbReference type="PhylomeDB" id="B7PKZ2"/>
<dbReference type="Proteomes" id="UP000001555">
    <property type="component" value="Unassembled WGS sequence"/>
</dbReference>
<dbReference type="GO" id="GO:0005737">
    <property type="term" value="C:cytoplasm"/>
    <property type="evidence" value="ECO:0000318"/>
    <property type="project" value="GO_Central"/>
</dbReference>
<dbReference type="GO" id="GO:0005615">
    <property type="term" value="C:extracellular space"/>
    <property type="evidence" value="ECO:0000314"/>
    <property type="project" value="UniProtKB"/>
</dbReference>
<dbReference type="GO" id="GO:0031982">
    <property type="term" value="C:vesicle"/>
    <property type="evidence" value="ECO:0000318"/>
    <property type="project" value="GO_Central"/>
</dbReference>
<dbReference type="GO" id="GO:0004869">
    <property type="term" value="F:cysteine-type endopeptidase inhibitor activity"/>
    <property type="evidence" value="ECO:0000314"/>
    <property type="project" value="UniProtKB"/>
</dbReference>
<dbReference type="CDD" id="cd00042">
    <property type="entry name" value="CY"/>
    <property type="match status" value="1"/>
</dbReference>
<dbReference type="FunFam" id="3.10.450.10:FF:000042">
    <property type="entry name" value="Salivary cystatin-L"/>
    <property type="match status" value="1"/>
</dbReference>
<dbReference type="Gene3D" id="3.10.450.10">
    <property type="match status" value="1"/>
</dbReference>
<dbReference type="InterPro" id="IPR000010">
    <property type="entry name" value="Cystatin_dom"/>
</dbReference>
<dbReference type="InterPro" id="IPR046350">
    <property type="entry name" value="Cystatin_sf"/>
</dbReference>
<dbReference type="InterPro" id="IPR018073">
    <property type="entry name" value="Prot_inh_cystat_CS"/>
</dbReference>
<dbReference type="PANTHER" id="PTHR46186">
    <property type="entry name" value="CYSTATIN"/>
    <property type="match status" value="1"/>
</dbReference>
<dbReference type="PANTHER" id="PTHR46186:SF2">
    <property type="entry name" value="CYSTATIN"/>
    <property type="match status" value="1"/>
</dbReference>
<dbReference type="Pfam" id="PF00031">
    <property type="entry name" value="Cystatin"/>
    <property type="match status" value="1"/>
</dbReference>
<dbReference type="SMART" id="SM00043">
    <property type="entry name" value="CY"/>
    <property type="match status" value="1"/>
</dbReference>
<dbReference type="SUPFAM" id="SSF54403">
    <property type="entry name" value="Cystatin/monellin"/>
    <property type="match status" value="1"/>
</dbReference>
<dbReference type="PROSITE" id="PS00287">
    <property type="entry name" value="CYSTATIN"/>
    <property type="match status" value="1"/>
</dbReference>
<name>CYTLG_IXOSC</name>
<protein>
    <recommendedName>
        <fullName evidence="2">Salivary cystatin-L</fullName>
    </recommendedName>
    <alternativeName>
        <fullName evidence="2">Sialostatin L</fullName>
        <shortName evidence="2">SialoL</shortName>
    </alternativeName>
</protein>
<reference key="1">
    <citation type="submission" date="2008-03" db="EMBL/GenBank/DDBJ databases">
        <title>Annotation of Ixodes scapularis.</title>
        <authorList>
            <consortium name="Ixodes scapularis Genome Project Consortium"/>
            <person name="Caler E."/>
            <person name="Hannick L.I."/>
            <person name="Bidwell S."/>
            <person name="Joardar V."/>
            <person name="Thiagarajan M."/>
            <person name="Amedeo P."/>
            <person name="Galinsky K.J."/>
            <person name="Schobel S."/>
            <person name="Inman J."/>
            <person name="Hostetler J."/>
            <person name="Miller J."/>
            <person name="Hammond M."/>
            <person name="Megy K."/>
            <person name="Lawson D."/>
            <person name="Kodira C."/>
            <person name="Sutton G."/>
            <person name="Meyer J."/>
            <person name="Hill C.A."/>
            <person name="Birren B."/>
            <person name="Nene V."/>
            <person name="Collins F."/>
            <person name="Alarcon-Chaidez F."/>
            <person name="Wikel S."/>
            <person name="Strausberg R."/>
        </authorList>
    </citation>
    <scope>NUCLEOTIDE SEQUENCE [LARGE SCALE GENOMIC DNA]</scope>
    <source>
        <strain>Wikel</strain>
    </source>
</reference>
<comment type="function">
    <text evidence="2">Inhibitor of cysteine proteinases. Inhibits host immune responses via its inhibition of host cathepsins. Contributes to the suppression of the host's immune response to tick salivary proteins and is important for successful feeding on hosts. Inhibits differentiation of host dendritic cells. Inhibits proliferation of host T-cells in response to antigen stimulus. Down-regulates TLR2-mediated host responses to infection by B.burgdorferi and the production of the chemokine CCL3 by host dendritic cells. Down-regulates host responses to infection by B.burgdorferi and the production of IFNB1 by host dendritic cells. Down-regulates IL1B production by host mast cells, and this then leads to impaired activation of IL1R1, resulting in decreased IL9 production. Inhibits host inflammatory reactions and recruitment of host neutrophils. Inhibits papain and cathepsin L (CTSL) (in vitro). Inhibits cathepsin S (CTSS) (in vitro). Inhibits CTSV and CTSC, but to a lesser degree (in vitro).</text>
</comment>
<comment type="subunit">
    <text evidence="2">Monomer. Can form homodimers in vitro, but probably not in vivo. Homodimers are predicted to be inactive; dimerization disrupts the interaction with target proteases.</text>
</comment>
<comment type="subcellular location">
    <subcellularLocation>
        <location evidence="2">Secreted</location>
    </subcellularLocation>
</comment>
<comment type="similarity">
    <text evidence="5">Belongs to the cystatin family.</text>
</comment>
<keyword id="KW-1015">Disulfide bond</keyword>
<keyword id="KW-0646">Protease inhibitor</keyword>
<keyword id="KW-1185">Reference proteome</keyword>
<keyword id="KW-0964">Secreted</keyword>
<keyword id="KW-0732">Signal</keyword>
<keyword id="KW-0789">Thiol protease inhibitor</keyword>
<feature type="signal peptide" evidence="3">
    <location>
        <begin position="1"/>
        <end position="19"/>
    </location>
</feature>
<feature type="chain" id="PRO_5005396730" description="Salivary cystatin-L" evidence="4">
    <location>
        <begin position="20"/>
        <end position="133"/>
    </location>
</feature>
<feature type="domain" description="Cystatin" evidence="3">
    <location>
        <begin position="30"/>
        <end position="117"/>
    </location>
</feature>
<feature type="site" description="Reactive site" evidence="1">
    <location>
        <position position="24"/>
    </location>
</feature>
<feature type="disulfide bond" evidence="2">
    <location>
        <begin position="89"/>
        <end position="100"/>
    </location>
</feature>
<feature type="disulfide bond" evidence="2">
    <location>
        <begin position="111"/>
        <end position="130"/>
    </location>
</feature>
<evidence type="ECO:0000250" key="1">
    <source>
        <dbReference type="UniProtKB" id="P01040"/>
    </source>
</evidence>
<evidence type="ECO:0000250" key="2">
    <source>
        <dbReference type="UniProtKB" id="Q8MVB6"/>
    </source>
</evidence>
<evidence type="ECO:0000255" key="3"/>
<evidence type="ECO:0000255" key="4">
    <source>
        <dbReference type="RuleBase" id="RU362130"/>
    </source>
</evidence>
<evidence type="ECO:0000305" key="5"/>
<evidence type="ECO:0000312" key="6">
    <source>
        <dbReference type="EMBL" id="EEC07264.1"/>
    </source>
</evidence>
<evidence type="ECO:0000312" key="7">
    <source>
        <dbReference type="Proteomes" id="UP000001555"/>
    </source>
</evidence>
<proteinExistence type="inferred from homology"/>
<sequence>MTSSFALVLLLGGVAVCVATGVFGGYSERANHQANPEFLNLAHYATSTWSAQQPGKTHFDTVAEVLKVETQVVAGTNYRLTLKVAESTCELTSTYNKDTCLPKADAAHRTCTTVVFESLQGDKSVSSFECEAA</sequence>
<gene>
    <name evidence="6" type="ORF">IscW_ISCW018603</name>
</gene>